<accession>Q0CFC7</accession>
<organism>
    <name type="scientific">Aspergillus terreus (strain NIH 2624 / FGSC A1156)</name>
    <dbReference type="NCBI Taxonomy" id="341663"/>
    <lineage>
        <taxon>Eukaryota</taxon>
        <taxon>Fungi</taxon>
        <taxon>Dikarya</taxon>
        <taxon>Ascomycota</taxon>
        <taxon>Pezizomycotina</taxon>
        <taxon>Eurotiomycetes</taxon>
        <taxon>Eurotiomycetidae</taxon>
        <taxon>Eurotiales</taxon>
        <taxon>Aspergillaceae</taxon>
        <taxon>Aspergillus</taxon>
        <taxon>Aspergillus subgen. Circumdati</taxon>
    </lineage>
</organism>
<feature type="signal peptide" evidence="2">
    <location>
        <begin position="1"/>
        <end position="20"/>
    </location>
</feature>
<feature type="chain" id="PRO_0000394390" description="Probable rhamnogalacturonase B">
    <location>
        <begin position="21"/>
        <end position="526"/>
    </location>
</feature>
<feature type="active site" description="Proton donor" evidence="1">
    <location>
        <position position="218"/>
    </location>
</feature>
<feature type="active site" evidence="1">
    <location>
        <position position="293"/>
    </location>
</feature>
<feature type="glycosylation site" description="N-linked (GlcNAc...) asparagine" evidence="2">
    <location>
        <position position="144"/>
    </location>
</feature>
<feature type="glycosylation site" description="N-linked (GlcNAc...) asparagine" evidence="2">
    <location>
        <position position="238"/>
    </location>
</feature>
<feature type="glycosylation site" description="N-linked (GlcNAc...) asparagine" evidence="2">
    <location>
        <position position="253"/>
    </location>
</feature>
<feature type="glycosylation site" description="N-linked (GlcNAc...) asparagine" evidence="2">
    <location>
        <position position="320"/>
    </location>
</feature>
<feature type="disulfide bond" evidence="1">
    <location>
        <begin position="41"/>
        <end position="67"/>
    </location>
</feature>
<feature type="disulfide bond" evidence="1">
    <location>
        <begin position="220"/>
        <end position="237"/>
    </location>
</feature>
<feature type="disulfide bond" evidence="1">
    <location>
        <begin position="343"/>
        <end position="349"/>
    </location>
</feature>
<feature type="disulfide bond" evidence="1">
    <location>
        <begin position="371"/>
        <end position="380"/>
    </location>
</feature>
<reference key="1">
    <citation type="submission" date="2005-09" db="EMBL/GenBank/DDBJ databases">
        <title>Annotation of the Aspergillus terreus NIH2624 genome.</title>
        <authorList>
            <person name="Birren B.W."/>
            <person name="Lander E.S."/>
            <person name="Galagan J.E."/>
            <person name="Nusbaum C."/>
            <person name="Devon K."/>
            <person name="Henn M."/>
            <person name="Ma L.-J."/>
            <person name="Jaffe D.B."/>
            <person name="Butler J."/>
            <person name="Alvarez P."/>
            <person name="Gnerre S."/>
            <person name="Grabherr M."/>
            <person name="Kleber M."/>
            <person name="Mauceli E.W."/>
            <person name="Brockman W."/>
            <person name="Rounsley S."/>
            <person name="Young S.K."/>
            <person name="LaButti K."/>
            <person name="Pushparaj V."/>
            <person name="DeCaprio D."/>
            <person name="Crawford M."/>
            <person name="Koehrsen M."/>
            <person name="Engels R."/>
            <person name="Montgomery P."/>
            <person name="Pearson M."/>
            <person name="Howarth C."/>
            <person name="Larson L."/>
            <person name="Luoma S."/>
            <person name="White J."/>
            <person name="Alvarado L."/>
            <person name="Kodira C.D."/>
            <person name="Zeng Q."/>
            <person name="Oleary S."/>
            <person name="Yandava C."/>
            <person name="Denning D.W."/>
            <person name="Nierman W.C."/>
            <person name="Milne T."/>
            <person name="Madden K."/>
        </authorList>
    </citation>
    <scope>NUCLEOTIDE SEQUENCE [LARGE SCALE GENOMIC DNA]</scope>
    <source>
        <strain>NIH 2624 / FGSC A1156</strain>
    </source>
</reference>
<name>RHGB_ASPTN</name>
<dbReference type="EC" id="3.2.1.171"/>
<dbReference type="EMBL" id="CH476604">
    <property type="protein sequence ID" value="EAU31869.1"/>
    <property type="molecule type" value="Genomic_DNA"/>
</dbReference>
<dbReference type="RefSeq" id="XP_001216228.1">
    <property type="nucleotide sequence ID" value="XM_001216228.1"/>
</dbReference>
<dbReference type="SMR" id="Q0CFC7"/>
<dbReference type="STRING" id="341663.Q0CFC7"/>
<dbReference type="GlyCosmos" id="Q0CFC7">
    <property type="glycosylation" value="4 sites, No reported glycans"/>
</dbReference>
<dbReference type="EnsemblFungi" id="EAU31869">
    <property type="protein sequence ID" value="EAU31869"/>
    <property type="gene ID" value="ATEG_07607"/>
</dbReference>
<dbReference type="GeneID" id="4322704"/>
<dbReference type="VEuPathDB" id="FungiDB:ATEG_07607"/>
<dbReference type="eggNOG" id="ENOG502R2FT">
    <property type="taxonomic scope" value="Eukaryota"/>
</dbReference>
<dbReference type="HOGENOM" id="CLU_016031_7_2_1"/>
<dbReference type="OMA" id="NMMLIKS"/>
<dbReference type="OrthoDB" id="2268901at2759"/>
<dbReference type="Proteomes" id="UP000007963">
    <property type="component" value="Unassembled WGS sequence"/>
</dbReference>
<dbReference type="GO" id="GO:0005576">
    <property type="term" value="C:extracellular region"/>
    <property type="evidence" value="ECO:0007669"/>
    <property type="project" value="UniProtKB-SubCell"/>
</dbReference>
<dbReference type="GO" id="GO:0004650">
    <property type="term" value="F:polygalacturonase activity"/>
    <property type="evidence" value="ECO:0007669"/>
    <property type="project" value="InterPro"/>
</dbReference>
<dbReference type="GO" id="GO:0046576">
    <property type="term" value="F:rhamnogalacturonan alpha-L-rhamnopyranosyl-(1-&gt;4)-alpha-D-galactopyranosyluronide lyase activity"/>
    <property type="evidence" value="ECO:0000250"/>
    <property type="project" value="UniProtKB"/>
</dbReference>
<dbReference type="GO" id="GO:0071555">
    <property type="term" value="P:cell wall organization"/>
    <property type="evidence" value="ECO:0007669"/>
    <property type="project" value="UniProtKB-KW"/>
</dbReference>
<dbReference type="GO" id="GO:0045490">
    <property type="term" value="P:pectin catabolic process"/>
    <property type="evidence" value="ECO:0000250"/>
    <property type="project" value="UniProtKB"/>
</dbReference>
<dbReference type="FunFam" id="2.160.20.10:FF:000025">
    <property type="entry name" value="Probable rhamnogalacturonase B"/>
    <property type="match status" value="1"/>
</dbReference>
<dbReference type="Gene3D" id="2.160.20.10">
    <property type="entry name" value="Single-stranded right-handed beta-helix, Pectin lyase-like"/>
    <property type="match status" value="1"/>
</dbReference>
<dbReference type="InterPro" id="IPR000743">
    <property type="entry name" value="Glyco_hydro_28"/>
</dbReference>
<dbReference type="InterPro" id="IPR012334">
    <property type="entry name" value="Pectin_lyas_fold"/>
</dbReference>
<dbReference type="InterPro" id="IPR011050">
    <property type="entry name" value="Pectin_lyase_fold/virulence"/>
</dbReference>
<dbReference type="PANTHER" id="PTHR31736">
    <property type="match status" value="1"/>
</dbReference>
<dbReference type="PANTHER" id="PTHR31736:SF19">
    <property type="entry name" value="PECTIN LYASE SUPERFAMILY PROTEIN-RELATED"/>
    <property type="match status" value="1"/>
</dbReference>
<dbReference type="Pfam" id="PF00295">
    <property type="entry name" value="Glyco_hydro_28"/>
    <property type="match status" value="1"/>
</dbReference>
<dbReference type="SUPFAM" id="SSF51126">
    <property type="entry name" value="Pectin lyase-like"/>
    <property type="match status" value="1"/>
</dbReference>
<protein>
    <recommendedName>
        <fullName>Probable rhamnogalacturonase B</fullName>
        <shortName>RGase B</shortName>
        <shortName>RHG B</shortName>
        <ecNumber>3.2.1.171</ecNumber>
    </recommendedName>
</protein>
<comment type="function">
    <text evidence="1">Pectinolytic enzymes consist of four classes of enzymes: pectine lyase, polygalacturonase, pectin methylesterase and rhamnogalacturonase. Hydrolyzes alpha-D-galacturonopyranosyl-(1,2)-alpha-L-rhamnopyranosyl linkages in the backbone of the hairy regions of pectins (By similarity).</text>
</comment>
<comment type="catalytic activity">
    <reaction>
        <text>Endohydrolysis of alpha-D-GalA-(1-&gt;2)-alpha-L-Rha glycosidic bond in the rhamnogalacturonan I backbone with initial inversion of anomeric configuration releasing oligosaccharides with beta-D-GalA at the reducing end.</text>
        <dbReference type="EC" id="3.2.1.171"/>
    </reaction>
</comment>
<comment type="subcellular location">
    <subcellularLocation>
        <location evidence="1">Secreted</location>
    </subcellularLocation>
</comment>
<comment type="similarity">
    <text evidence="3">Belongs to the glycosyl hydrolase 28 family.</text>
</comment>
<gene>
    <name type="primary">rhgB</name>
    <name type="ORF">ATEG_07607</name>
</gene>
<keyword id="KW-0119">Carbohydrate metabolism</keyword>
<keyword id="KW-0961">Cell wall biogenesis/degradation</keyword>
<keyword id="KW-1015">Disulfide bond</keyword>
<keyword id="KW-0325">Glycoprotein</keyword>
<keyword id="KW-0326">Glycosidase</keyword>
<keyword id="KW-0378">Hydrolase</keyword>
<keyword id="KW-0624">Polysaccharide degradation</keyword>
<keyword id="KW-1185">Reference proteome</keyword>
<keyword id="KW-0964">Secreted</keyword>
<keyword id="KW-0732">Signal</keyword>
<proteinExistence type="inferred from homology"/>
<sequence>MHVNTLSVLSLVGLVPLAAARLSGSVGPLTSASAKAATKTCNVLDYGAAADKTTDLGAPLASAFADCKTGGLVYVPPGDYALESWAQLSGGKAWALQIDGTIYRTGTDGGNMIFIEHSSDFELFSSTSSGAMQGLGYEFHKDDNWSGPRLLRLYDVSDFALHDFILVDSPSFHLSLDTCSNGEVYNMAIRGGNHGALDGVDVWSTNIWIHDVEVTNKDECVTVKSPAQNILVENIYCNWSGGCGMGSLGADTNISDITYRNVYTWNSNQMMLIKSNGGSGTVSNVVLENFIGHGNAYSLDIDSAWSSMSTQSGDGVEFSNFTIRNWKGTEANGAERGPVKIICPNGAPCYEMYIEDFAMWTEEGDEQWYTCQSAFGSGFCLQSGSDYSSYEATTSTATSAPSGYSAPTMASDLTRDFGSTVSIPIPTIPTSFYPGATPYSALMGAQSSASANVRAVAFGTSAVVSRAGSSSRPAQTGSFLTKSTTAAAGSIMGPTAAAVQGVCAPPAGQGRGAARYGGHRRHGHRH</sequence>
<evidence type="ECO:0000250" key="1"/>
<evidence type="ECO:0000255" key="2"/>
<evidence type="ECO:0000305" key="3"/>